<dbReference type="EC" id="3.5.1.5" evidence="1"/>
<dbReference type="EMBL" id="CP001052">
    <property type="protein sequence ID" value="ACD15348.1"/>
    <property type="molecule type" value="Genomic_DNA"/>
</dbReference>
<dbReference type="RefSeq" id="WP_012431980.1">
    <property type="nucleotide sequence ID" value="NC_010681.1"/>
</dbReference>
<dbReference type="SMR" id="B2T0P6"/>
<dbReference type="STRING" id="398527.Bphyt_0929"/>
<dbReference type="KEGG" id="bpy:Bphyt_0929"/>
<dbReference type="eggNOG" id="COG0832">
    <property type="taxonomic scope" value="Bacteria"/>
</dbReference>
<dbReference type="HOGENOM" id="CLU_129707_1_1_4"/>
<dbReference type="OrthoDB" id="9797217at2"/>
<dbReference type="UniPathway" id="UPA00258">
    <property type="reaction ID" value="UER00370"/>
</dbReference>
<dbReference type="Proteomes" id="UP000001739">
    <property type="component" value="Chromosome 1"/>
</dbReference>
<dbReference type="GO" id="GO:0035550">
    <property type="term" value="C:urease complex"/>
    <property type="evidence" value="ECO:0007669"/>
    <property type="project" value="InterPro"/>
</dbReference>
<dbReference type="GO" id="GO:0009039">
    <property type="term" value="F:urease activity"/>
    <property type="evidence" value="ECO:0007669"/>
    <property type="project" value="UniProtKB-UniRule"/>
</dbReference>
<dbReference type="GO" id="GO:0043419">
    <property type="term" value="P:urea catabolic process"/>
    <property type="evidence" value="ECO:0007669"/>
    <property type="project" value="UniProtKB-UniRule"/>
</dbReference>
<dbReference type="CDD" id="cd00407">
    <property type="entry name" value="Urease_beta"/>
    <property type="match status" value="1"/>
</dbReference>
<dbReference type="FunFam" id="2.10.150.10:FF:000001">
    <property type="entry name" value="Urease subunit beta"/>
    <property type="match status" value="1"/>
</dbReference>
<dbReference type="Gene3D" id="2.10.150.10">
    <property type="entry name" value="Urease, beta subunit"/>
    <property type="match status" value="1"/>
</dbReference>
<dbReference type="HAMAP" id="MF_01954">
    <property type="entry name" value="Urease_beta"/>
    <property type="match status" value="1"/>
</dbReference>
<dbReference type="InterPro" id="IPR002019">
    <property type="entry name" value="Urease_beta-like"/>
</dbReference>
<dbReference type="InterPro" id="IPR036461">
    <property type="entry name" value="Urease_betasu_sf"/>
</dbReference>
<dbReference type="InterPro" id="IPR050069">
    <property type="entry name" value="Urease_subunit"/>
</dbReference>
<dbReference type="NCBIfam" id="NF009682">
    <property type="entry name" value="PRK13203.1"/>
    <property type="match status" value="1"/>
</dbReference>
<dbReference type="NCBIfam" id="TIGR00192">
    <property type="entry name" value="urease_beta"/>
    <property type="match status" value="1"/>
</dbReference>
<dbReference type="PANTHER" id="PTHR33569">
    <property type="entry name" value="UREASE"/>
    <property type="match status" value="1"/>
</dbReference>
<dbReference type="PANTHER" id="PTHR33569:SF1">
    <property type="entry name" value="UREASE"/>
    <property type="match status" value="1"/>
</dbReference>
<dbReference type="Pfam" id="PF00699">
    <property type="entry name" value="Urease_beta"/>
    <property type="match status" value="1"/>
</dbReference>
<dbReference type="SUPFAM" id="SSF51278">
    <property type="entry name" value="Urease, beta-subunit"/>
    <property type="match status" value="1"/>
</dbReference>
<comment type="catalytic activity">
    <reaction evidence="1">
        <text>urea + 2 H2O + H(+) = hydrogencarbonate + 2 NH4(+)</text>
        <dbReference type="Rhea" id="RHEA:20557"/>
        <dbReference type="ChEBI" id="CHEBI:15377"/>
        <dbReference type="ChEBI" id="CHEBI:15378"/>
        <dbReference type="ChEBI" id="CHEBI:16199"/>
        <dbReference type="ChEBI" id="CHEBI:17544"/>
        <dbReference type="ChEBI" id="CHEBI:28938"/>
        <dbReference type="EC" id="3.5.1.5"/>
    </reaction>
</comment>
<comment type="pathway">
    <text evidence="1">Nitrogen metabolism; urea degradation; CO(2) and NH(3) from urea (urease route): step 1/1.</text>
</comment>
<comment type="subunit">
    <text evidence="1">Heterotrimer of UreA (gamma), UreB (beta) and UreC (alpha) subunits. Three heterotrimers associate to form the active enzyme.</text>
</comment>
<comment type="subcellular location">
    <subcellularLocation>
        <location evidence="1">Cytoplasm</location>
    </subcellularLocation>
</comment>
<comment type="similarity">
    <text evidence="1">Belongs to the urease beta subunit family.</text>
</comment>
<keyword id="KW-0963">Cytoplasm</keyword>
<keyword id="KW-0378">Hydrolase</keyword>
<accession>B2T0P6</accession>
<reference key="1">
    <citation type="journal article" date="2011" name="J. Bacteriol.">
        <title>Complete genome sequence of the plant growth-promoting endophyte Burkholderia phytofirmans strain PsJN.</title>
        <authorList>
            <person name="Weilharter A."/>
            <person name="Mitter B."/>
            <person name="Shin M.V."/>
            <person name="Chain P.S."/>
            <person name="Nowak J."/>
            <person name="Sessitsch A."/>
        </authorList>
    </citation>
    <scope>NUCLEOTIDE SEQUENCE [LARGE SCALE GENOMIC DNA]</scope>
    <source>
        <strain>DSM 17436 / LMG 22146 / PsJN</strain>
    </source>
</reference>
<evidence type="ECO:0000255" key="1">
    <source>
        <dbReference type="HAMAP-Rule" id="MF_01954"/>
    </source>
</evidence>
<sequence length="101" mass="11058">MIPGELLIDDGEHELNAGRATVTVVVSNTGDRPVQIGSHYHFYEVNEALAFDREAARGFRLNIAAGTAVRFEPGQERTVELVELAGERIVYGFNGKVMGKL</sequence>
<gene>
    <name evidence="1" type="primary">ureB</name>
    <name type="ordered locus">Bphyt_0929</name>
</gene>
<organism>
    <name type="scientific">Paraburkholderia phytofirmans (strain DSM 17436 / LMG 22146 / PsJN)</name>
    <name type="common">Burkholderia phytofirmans</name>
    <dbReference type="NCBI Taxonomy" id="398527"/>
    <lineage>
        <taxon>Bacteria</taxon>
        <taxon>Pseudomonadati</taxon>
        <taxon>Pseudomonadota</taxon>
        <taxon>Betaproteobacteria</taxon>
        <taxon>Burkholderiales</taxon>
        <taxon>Burkholderiaceae</taxon>
        <taxon>Paraburkholderia</taxon>
    </lineage>
</organism>
<proteinExistence type="inferred from homology"/>
<protein>
    <recommendedName>
        <fullName evidence="1">Urease subunit beta</fullName>
        <ecNumber evidence="1">3.5.1.5</ecNumber>
    </recommendedName>
    <alternativeName>
        <fullName evidence="1">Urea amidohydrolase subunit beta</fullName>
    </alternativeName>
</protein>
<name>URE2_PARPJ</name>
<feature type="chain" id="PRO_1000188918" description="Urease subunit beta">
    <location>
        <begin position="1"/>
        <end position="101"/>
    </location>
</feature>